<accession>Q5HDT2</accession>
<protein>
    <recommendedName>
        <fullName>Molybdenum cofactor biosynthesis protein B</fullName>
    </recommendedName>
</protein>
<evidence type="ECO:0000250" key="1"/>
<evidence type="ECO:0000305" key="2"/>
<dbReference type="EMBL" id="CP000046">
    <property type="protein sequence ID" value="AAW38488.1"/>
    <property type="molecule type" value="Genomic_DNA"/>
</dbReference>
<dbReference type="RefSeq" id="WP_000503820.1">
    <property type="nucleotide sequence ID" value="NZ_JBGOFO010000004.1"/>
</dbReference>
<dbReference type="SMR" id="Q5HDT2"/>
<dbReference type="KEGG" id="sac:SACOL2268"/>
<dbReference type="HOGENOM" id="CLU_077358_2_3_9"/>
<dbReference type="UniPathway" id="UPA00344"/>
<dbReference type="Proteomes" id="UP000000530">
    <property type="component" value="Chromosome"/>
</dbReference>
<dbReference type="GO" id="GO:0005829">
    <property type="term" value="C:cytosol"/>
    <property type="evidence" value="ECO:0007669"/>
    <property type="project" value="TreeGrafter"/>
</dbReference>
<dbReference type="GO" id="GO:0006777">
    <property type="term" value="P:Mo-molybdopterin cofactor biosynthetic process"/>
    <property type="evidence" value="ECO:0007669"/>
    <property type="project" value="UniProtKB-KW"/>
</dbReference>
<dbReference type="CDD" id="cd00886">
    <property type="entry name" value="MogA_MoaB"/>
    <property type="match status" value="1"/>
</dbReference>
<dbReference type="FunFam" id="3.40.980.10:FF:000006">
    <property type="entry name" value="Molybdenum cofactor biosynthesis protein B"/>
    <property type="match status" value="1"/>
</dbReference>
<dbReference type="Gene3D" id="3.40.980.10">
    <property type="entry name" value="MoaB/Mog-like domain"/>
    <property type="match status" value="1"/>
</dbReference>
<dbReference type="InterPro" id="IPR012245">
    <property type="entry name" value="MoaB"/>
</dbReference>
<dbReference type="InterPro" id="IPR036425">
    <property type="entry name" value="MoaB/Mog-like_dom_sf"/>
</dbReference>
<dbReference type="InterPro" id="IPR001453">
    <property type="entry name" value="MoaB/Mog_dom"/>
</dbReference>
<dbReference type="InterPro" id="IPR008284">
    <property type="entry name" value="MoCF_biosynth_CS"/>
</dbReference>
<dbReference type="NCBIfam" id="TIGR00177">
    <property type="entry name" value="molyb_syn"/>
    <property type="match status" value="1"/>
</dbReference>
<dbReference type="PANTHER" id="PTHR43232">
    <property type="entry name" value="MOLYBDENUM COFACTOR BIOSYNTHESIS PROTEIN B"/>
    <property type="match status" value="1"/>
</dbReference>
<dbReference type="PANTHER" id="PTHR43232:SF2">
    <property type="entry name" value="MOLYBDENUM COFACTOR BIOSYNTHESIS PROTEIN B"/>
    <property type="match status" value="1"/>
</dbReference>
<dbReference type="Pfam" id="PF00994">
    <property type="entry name" value="MoCF_biosynth"/>
    <property type="match status" value="1"/>
</dbReference>
<dbReference type="PIRSF" id="PIRSF006443">
    <property type="entry name" value="MoaB"/>
    <property type="match status" value="1"/>
</dbReference>
<dbReference type="SMART" id="SM00852">
    <property type="entry name" value="MoCF_biosynth"/>
    <property type="match status" value="1"/>
</dbReference>
<dbReference type="SUPFAM" id="SSF53218">
    <property type="entry name" value="Molybdenum cofactor biosynthesis proteins"/>
    <property type="match status" value="1"/>
</dbReference>
<dbReference type="PROSITE" id="PS01078">
    <property type="entry name" value="MOCF_BIOSYNTHESIS_1"/>
    <property type="match status" value="1"/>
</dbReference>
<proteinExistence type="inferred from homology"/>
<feature type="chain" id="PRO_0000170972" description="Molybdenum cofactor biosynthesis protein B">
    <location>
        <begin position="1"/>
        <end position="168"/>
    </location>
</feature>
<sequence length="168" mass="18500">MGEHQNVKLNRTVKAAVLTVSDTRDFDTDKGGQCVRQLLQADDVEVSDAHYTIVKDEKVAITTQVKKWLEEDIDVIITTGGTGIAQRDVTIEAVKPLLTKEIEGFGELFRYLSYVEDVGTRALLSRAVAGTVNNKLIFSIPGSTGAVKLALEKLIKPELNHLIHELTK</sequence>
<gene>
    <name type="primary">moaB</name>
    <name type="ordered locus">SACOL2268</name>
</gene>
<reference key="1">
    <citation type="journal article" date="2005" name="J. Bacteriol.">
        <title>Insights on evolution of virulence and resistance from the complete genome analysis of an early methicillin-resistant Staphylococcus aureus strain and a biofilm-producing methicillin-resistant Staphylococcus epidermidis strain.</title>
        <authorList>
            <person name="Gill S.R."/>
            <person name="Fouts D.E."/>
            <person name="Archer G.L."/>
            <person name="Mongodin E.F."/>
            <person name="DeBoy R.T."/>
            <person name="Ravel J."/>
            <person name="Paulsen I.T."/>
            <person name="Kolonay J.F."/>
            <person name="Brinkac L.M."/>
            <person name="Beanan M.J."/>
            <person name="Dodson R.J."/>
            <person name="Daugherty S.C."/>
            <person name="Madupu R."/>
            <person name="Angiuoli S.V."/>
            <person name="Durkin A.S."/>
            <person name="Haft D.H."/>
            <person name="Vamathevan J.J."/>
            <person name="Khouri H."/>
            <person name="Utterback T.R."/>
            <person name="Lee C."/>
            <person name="Dimitrov G."/>
            <person name="Jiang L."/>
            <person name="Qin H."/>
            <person name="Weidman J."/>
            <person name="Tran K."/>
            <person name="Kang K.H."/>
            <person name="Hance I.R."/>
            <person name="Nelson K.E."/>
            <person name="Fraser C.M."/>
        </authorList>
    </citation>
    <scope>NUCLEOTIDE SEQUENCE [LARGE SCALE GENOMIC DNA]</scope>
    <source>
        <strain>COL</strain>
    </source>
</reference>
<name>MOAB_STAAC</name>
<comment type="function">
    <text evidence="1">May be involved in the biosynthesis of molybdopterin.</text>
</comment>
<comment type="pathway">
    <text>Cofactor biosynthesis; molybdopterin biosynthesis.</text>
</comment>
<comment type="similarity">
    <text evidence="2">Belongs to the MoaB/Mog family.</text>
</comment>
<keyword id="KW-0501">Molybdenum cofactor biosynthesis</keyword>
<organism>
    <name type="scientific">Staphylococcus aureus (strain COL)</name>
    <dbReference type="NCBI Taxonomy" id="93062"/>
    <lineage>
        <taxon>Bacteria</taxon>
        <taxon>Bacillati</taxon>
        <taxon>Bacillota</taxon>
        <taxon>Bacilli</taxon>
        <taxon>Bacillales</taxon>
        <taxon>Staphylococcaceae</taxon>
        <taxon>Staphylococcus</taxon>
    </lineage>
</organism>